<evidence type="ECO:0000255" key="1"/>
<evidence type="ECO:0000305" key="2"/>
<sequence>MVLTDAEELRSPVITSDMSFFDLESNHSSDSVHLLCEKYTHKLPIESESQTTFRLAPTKQRLYRQSTLYVPLSLKQRVFLFTERVKSIWAGLPRCKPNKYFKVAFALAVLTPLAIWIFYIDFRVH</sequence>
<keyword id="KW-0472">Membrane</keyword>
<keyword id="KW-1185">Reference proteome</keyword>
<keyword id="KW-0812">Transmembrane</keyword>
<keyword id="KW-1133">Transmembrane helix</keyword>
<name>YC021_YEAST</name>
<reference key="1">
    <citation type="journal article" date="1992" name="Nature">
        <title>The complete DNA sequence of yeast chromosome III.</title>
        <authorList>
            <person name="Oliver S.G."/>
            <person name="van der Aart Q.J.M."/>
            <person name="Agostoni-Carbone M.L."/>
            <person name="Aigle M."/>
            <person name="Alberghina L."/>
            <person name="Alexandraki D."/>
            <person name="Antoine G."/>
            <person name="Anwar R."/>
            <person name="Ballesta J.P.G."/>
            <person name="Benit P."/>
            <person name="Berben G."/>
            <person name="Bergantino E."/>
            <person name="Biteau N."/>
            <person name="Bolle P.-A."/>
            <person name="Bolotin-Fukuhara M."/>
            <person name="Brown A."/>
            <person name="Brown A.J.P."/>
            <person name="Buhler J.-M."/>
            <person name="Carcano C."/>
            <person name="Carignani G."/>
            <person name="Cederberg H."/>
            <person name="Chanet R."/>
            <person name="Contreras R."/>
            <person name="Crouzet M."/>
            <person name="Daignan-Fornier B."/>
            <person name="Defoor E."/>
            <person name="Delgado M.D."/>
            <person name="Demolder J."/>
            <person name="Doira C."/>
            <person name="Dubois E."/>
            <person name="Dujon B."/>
            <person name="Duesterhoeft A."/>
            <person name="Erdmann D."/>
            <person name="Esteban M."/>
            <person name="Fabre F."/>
            <person name="Fairhead C."/>
            <person name="Faye G."/>
            <person name="Feldmann H."/>
            <person name="Fiers W."/>
            <person name="Francingues-Gaillard M.-C."/>
            <person name="Franco L."/>
            <person name="Frontali L."/>
            <person name="Fukuhara H."/>
            <person name="Fuller L.J."/>
            <person name="Galland P."/>
            <person name="Gent M.E."/>
            <person name="Gigot D."/>
            <person name="Gilliquet V."/>
            <person name="Glansdorff N."/>
            <person name="Goffeau A."/>
            <person name="Grenson M."/>
            <person name="Grisanti P."/>
            <person name="Grivell L.A."/>
            <person name="de Haan M."/>
            <person name="Haasemann M."/>
            <person name="Hatat D."/>
            <person name="Hoenicka J."/>
            <person name="Hegemann J.H."/>
            <person name="Herbert C.J."/>
            <person name="Hilger F."/>
            <person name="Hohmann S."/>
            <person name="Hollenberg C.P."/>
            <person name="Huse K."/>
            <person name="Iborra F."/>
            <person name="Indge K.J."/>
            <person name="Isono K."/>
            <person name="Jacq C."/>
            <person name="Jacquet M."/>
            <person name="James C.M."/>
            <person name="Jauniaux J.-C."/>
            <person name="Jia Y."/>
            <person name="Jimenez A."/>
            <person name="Kelly A."/>
            <person name="Kleinhans U."/>
            <person name="Kreisl P."/>
            <person name="Lanfranchi G."/>
            <person name="Lewis C."/>
            <person name="van der Linden C.G."/>
            <person name="Lucchini G."/>
            <person name="Lutzenkirchen K."/>
            <person name="Maat M.J."/>
            <person name="Mallet L."/>
            <person name="Mannhaupt G."/>
            <person name="Martegani E."/>
            <person name="Mathieu A."/>
            <person name="Maurer C.T.C."/>
            <person name="McConnell D."/>
            <person name="McKee R.A."/>
            <person name="Messenguy F."/>
            <person name="Mewes H.-W."/>
            <person name="Molemans F."/>
            <person name="Montague M.A."/>
            <person name="Muzi Falconi M."/>
            <person name="Navas L."/>
            <person name="Newlon C.S."/>
            <person name="Noone D."/>
            <person name="Pallier C."/>
            <person name="Panzeri L."/>
            <person name="Pearson B.M."/>
            <person name="Perea J."/>
            <person name="Philippsen P."/>
            <person name="Pierard A."/>
            <person name="Planta R.J."/>
            <person name="Plevani P."/>
            <person name="Poetsch B."/>
            <person name="Pohl F.M."/>
            <person name="Purnelle B."/>
            <person name="Ramezani Rad M."/>
            <person name="Rasmussen S.W."/>
            <person name="Raynal A."/>
            <person name="Remacha M.A."/>
            <person name="Richterich P."/>
            <person name="Roberts A.B."/>
            <person name="Rodriguez F."/>
            <person name="Sanz E."/>
            <person name="Schaaff-Gerstenschlaeger I."/>
            <person name="Scherens B."/>
            <person name="Schweitzer B."/>
            <person name="Shu Y."/>
            <person name="Skala J."/>
            <person name="Slonimski P.P."/>
            <person name="Sor F."/>
            <person name="Soustelle C."/>
            <person name="Spiegelberg R."/>
            <person name="Stateva L.I."/>
            <person name="Steensma H.Y."/>
            <person name="Steiner S."/>
            <person name="Thierry A."/>
            <person name="Thireos G."/>
            <person name="Tzermia M."/>
            <person name="Urrestarazu L.A."/>
            <person name="Valle G."/>
            <person name="Vetter I."/>
            <person name="van Vliet-Reedijk J.C."/>
            <person name="Voet M."/>
            <person name="Volckaert G."/>
            <person name="Vreken P."/>
            <person name="Wang H."/>
            <person name="Warmington J.R."/>
            <person name="von Wettstein D."/>
            <person name="Wicksteed B.L."/>
            <person name="Wilson C."/>
            <person name="Wurst H."/>
            <person name="Xu G."/>
            <person name="Yoshikawa A."/>
            <person name="Zimmermann F.K."/>
            <person name="Sgouros J.G."/>
        </authorList>
    </citation>
    <scope>NUCLEOTIDE SEQUENCE [LARGE SCALE GENOMIC DNA]</scope>
    <source>
        <strain>ATCC 204508 / S288c</strain>
    </source>
</reference>
<reference key="2">
    <citation type="journal article" date="2014" name="G3 (Bethesda)">
        <title>The reference genome sequence of Saccharomyces cerevisiae: Then and now.</title>
        <authorList>
            <person name="Engel S.R."/>
            <person name="Dietrich F.S."/>
            <person name="Fisk D.G."/>
            <person name="Binkley G."/>
            <person name="Balakrishnan R."/>
            <person name="Costanzo M.C."/>
            <person name="Dwight S.S."/>
            <person name="Hitz B.C."/>
            <person name="Karra K."/>
            <person name="Nash R.S."/>
            <person name="Weng S."/>
            <person name="Wong E.D."/>
            <person name="Lloyd P."/>
            <person name="Skrzypek M.S."/>
            <person name="Miyasato S.R."/>
            <person name="Simison M."/>
            <person name="Cherry J.M."/>
        </authorList>
    </citation>
    <scope>GENOME REANNOTATION</scope>
    <source>
        <strain>ATCC 204508 / S288c</strain>
    </source>
</reference>
<feature type="chain" id="PRO_0000248447" description="Putative uncharacterized protein YCL021W-A">
    <location>
        <begin position="1"/>
        <end position="125"/>
    </location>
</feature>
<feature type="transmembrane region" description="Helical" evidence="1">
    <location>
        <begin position="100"/>
        <end position="120"/>
    </location>
</feature>
<organism>
    <name type="scientific">Saccharomyces cerevisiae (strain ATCC 204508 / S288c)</name>
    <name type="common">Baker's yeast</name>
    <dbReference type="NCBI Taxonomy" id="559292"/>
    <lineage>
        <taxon>Eukaryota</taxon>
        <taxon>Fungi</taxon>
        <taxon>Dikarya</taxon>
        <taxon>Ascomycota</taxon>
        <taxon>Saccharomycotina</taxon>
        <taxon>Saccharomycetes</taxon>
        <taxon>Saccharomycetales</taxon>
        <taxon>Saccharomycetaceae</taxon>
        <taxon>Saccharomyces</taxon>
    </lineage>
</organism>
<protein>
    <recommendedName>
        <fullName>Putative uncharacterized protein YCL021W-A</fullName>
    </recommendedName>
</protein>
<comment type="subcellular location">
    <subcellularLocation>
        <location evidence="2">Membrane</location>
        <topology evidence="2">Single-pass membrane protein</topology>
    </subcellularLocation>
</comment>
<dbReference type="EMBL" id="X59720">
    <property type="protein sequence ID" value="CAC42962.1"/>
    <property type="molecule type" value="Genomic_DNA"/>
</dbReference>
<dbReference type="EMBL" id="BK006937">
    <property type="protein sequence ID" value="DAA07462.1"/>
    <property type="molecule type" value="Genomic_DNA"/>
</dbReference>
<dbReference type="RefSeq" id="NP_065437.1">
    <property type="nucleotide sequence ID" value="NM_001184450.1"/>
</dbReference>
<dbReference type="BioGRID" id="30962">
    <property type="interactions" value="6"/>
</dbReference>
<dbReference type="FunCoup" id="Q96VH3">
    <property type="interactions" value="23"/>
</dbReference>
<dbReference type="IntAct" id="Q96VH3">
    <property type="interactions" value="5"/>
</dbReference>
<dbReference type="MINT" id="Q96VH3"/>
<dbReference type="STRING" id="4932.YCL021W-A"/>
<dbReference type="PaxDb" id="4932-YCL021W-A"/>
<dbReference type="EnsemblFungi" id="YCL021W-A_mRNA">
    <property type="protein sequence ID" value="YCL021W-A"/>
    <property type="gene ID" value="YCL021W-A"/>
</dbReference>
<dbReference type="GeneID" id="850338"/>
<dbReference type="KEGG" id="sce:YCL021W-A"/>
<dbReference type="AGR" id="SGD:S000007549"/>
<dbReference type="SGD" id="S000007549">
    <property type="gene designation" value="YCL021W-A"/>
</dbReference>
<dbReference type="VEuPathDB" id="FungiDB:YCL021W-A"/>
<dbReference type="HOGENOM" id="CLU_1994401_0_0_1"/>
<dbReference type="InParanoid" id="Q96VH3"/>
<dbReference type="OrthoDB" id="4042362at2759"/>
<dbReference type="BioCyc" id="YEAST:G3O-29421-MONOMER"/>
<dbReference type="BioGRID-ORCS" id="850338">
    <property type="hits" value="2 hits in 10 CRISPR screens"/>
</dbReference>
<dbReference type="PRO" id="PR:Q96VH3"/>
<dbReference type="Proteomes" id="UP000002311">
    <property type="component" value="Chromosome III"/>
</dbReference>
<dbReference type="RNAct" id="Q96VH3">
    <property type="molecule type" value="protein"/>
</dbReference>
<dbReference type="GO" id="GO:0000324">
    <property type="term" value="C:fungal-type vacuole"/>
    <property type="evidence" value="ECO:0007005"/>
    <property type="project" value="SGD"/>
</dbReference>
<dbReference type="GO" id="GO:0016020">
    <property type="term" value="C:membrane"/>
    <property type="evidence" value="ECO:0007669"/>
    <property type="project" value="UniProtKB-SubCell"/>
</dbReference>
<gene>
    <name type="ordered locus">YCL021W-A</name>
</gene>
<proteinExistence type="predicted"/>
<accession>Q96VH3</accession>
<accession>D6VQZ3</accession>